<keyword id="KW-0961">Cell wall biogenesis/degradation</keyword>
<keyword id="KW-1015">Disulfide bond</keyword>
<keyword id="KW-0325">Glycoprotein</keyword>
<keyword id="KW-0326">Glycosidase</keyword>
<keyword id="KW-0378">Hydrolase</keyword>
<keyword id="KW-1185">Reference proteome</keyword>
<keyword id="KW-0677">Repeat</keyword>
<keyword id="KW-0964">Secreted</keyword>
<keyword id="KW-0732">Signal</keyword>
<feature type="signal peptide" evidence="2">
    <location>
        <begin position="1"/>
        <end position="21"/>
    </location>
</feature>
<feature type="chain" id="PRO_0000393689" description="Probable exopolygalacturonase C">
    <location>
        <begin position="22"/>
        <end position="440"/>
    </location>
</feature>
<feature type="repeat" description="PbH1 1">
    <location>
        <begin position="217"/>
        <end position="238"/>
    </location>
</feature>
<feature type="repeat" description="PbH1 2">
    <location>
        <begin position="240"/>
        <end position="261"/>
    </location>
</feature>
<feature type="repeat" description="PbH1 3">
    <location>
        <begin position="272"/>
        <end position="293"/>
    </location>
</feature>
<feature type="active site" description="Proton donor" evidence="1">
    <location>
        <position position="231"/>
    </location>
</feature>
<feature type="active site" evidence="1">
    <location>
        <position position="255"/>
    </location>
</feature>
<feature type="glycosylation site" description="N-linked (GlcNAc...) asparagine" evidence="2">
    <location>
        <position position="24"/>
    </location>
</feature>
<feature type="glycosylation site" description="N-linked (GlcNAc...) asparagine" evidence="2">
    <location>
        <position position="84"/>
    </location>
</feature>
<feature type="glycosylation site" description="N-linked (GlcNAc...) asparagine" evidence="2">
    <location>
        <position position="151"/>
    </location>
</feature>
<feature type="glycosylation site" description="N-linked (GlcNAc...) asparagine" evidence="2">
    <location>
        <position position="219"/>
    </location>
</feature>
<feature type="glycosylation site" description="N-linked (GlcNAc...) asparagine" evidence="2">
    <location>
        <position position="271"/>
    </location>
</feature>
<feature type="glycosylation site" description="N-linked (GlcNAc...) asparagine" evidence="2">
    <location>
        <position position="313"/>
    </location>
</feature>
<feature type="glycosylation site" description="N-linked (GlcNAc...) asparagine" evidence="2">
    <location>
        <position position="350"/>
    </location>
</feature>
<feature type="glycosylation site" description="N-linked (GlcNAc...) asparagine" evidence="2">
    <location>
        <position position="434"/>
    </location>
</feature>
<feature type="disulfide bond" evidence="1">
    <location>
        <begin position="389"/>
        <end position="395"/>
    </location>
</feature>
<protein>
    <recommendedName>
        <fullName>Probable exopolygalacturonase C</fullName>
        <ecNumber>3.2.1.67</ecNumber>
    </recommendedName>
    <alternativeName>
        <fullName>Galacturan 1,4-alpha-galacturonidase C</fullName>
    </alternativeName>
    <alternativeName>
        <fullName>Poly(1,4-alpha-D-galacturonide)galacturonohydrolase C</fullName>
    </alternativeName>
</protein>
<organism>
    <name type="scientific">Neosartorya fischeri (strain ATCC 1020 / DSM 3700 / CBS 544.65 / FGSC A1164 / JCM 1740 / NRRL 181 / WB 181)</name>
    <name type="common">Aspergillus fischerianus</name>
    <dbReference type="NCBI Taxonomy" id="331117"/>
    <lineage>
        <taxon>Eukaryota</taxon>
        <taxon>Fungi</taxon>
        <taxon>Dikarya</taxon>
        <taxon>Ascomycota</taxon>
        <taxon>Pezizomycotina</taxon>
        <taxon>Eurotiomycetes</taxon>
        <taxon>Eurotiomycetidae</taxon>
        <taxon>Eurotiales</taxon>
        <taxon>Aspergillaceae</taxon>
        <taxon>Aspergillus</taxon>
        <taxon>Aspergillus subgen. Fumigati</taxon>
    </lineage>
</organism>
<name>PGXC_NEOFI</name>
<dbReference type="EC" id="3.2.1.67"/>
<dbReference type="EMBL" id="DS027690">
    <property type="protein sequence ID" value="EAW21675.1"/>
    <property type="molecule type" value="Genomic_DNA"/>
</dbReference>
<dbReference type="RefSeq" id="XP_001263572.1">
    <property type="nucleotide sequence ID" value="XM_001263571.1"/>
</dbReference>
<dbReference type="SMR" id="A1D7I1"/>
<dbReference type="STRING" id="331117.A1D7I1"/>
<dbReference type="GlyCosmos" id="A1D7I1">
    <property type="glycosylation" value="8 sites, No reported glycans"/>
</dbReference>
<dbReference type="EnsemblFungi" id="EAW21675">
    <property type="protein sequence ID" value="EAW21675"/>
    <property type="gene ID" value="NFIA_068440"/>
</dbReference>
<dbReference type="GeneID" id="4590218"/>
<dbReference type="KEGG" id="nfi:NFIA_068440"/>
<dbReference type="VEuPathDB" id="FungiDB:NFIA_068440"/>
<dbReference type="eggNOG" id="ENOG502SI66">
    <property type="taxonomic scope" value="Eukaryota"/>
</dbReference>
<dbReference type="HOGENOM" id="CLU_016031_1_2_1"/>
<dbReference type="OMA" id="RNSYCEG"/>
<dbReference type="OrthoDB" id="187139at2759"/>
<dbReference type="Proteomes" id="UP000006702">
    <property type="component" value="Unassembled WGS sequence"/>
</dbReference>
<dbReference type="GO" id="GO:0005576">
    <property type="term" value="C:extracellular region"/>
    <property type="evidence" value="ECO:0000250"/>
    <property type="project" value="UniProtKB"/>
</dbReference>
<dbReference type="GO" id="GO:0047911">
    <property type="term" value="F:galacturan 1,4-alpha-galacturonidase activity"/>
    <property type="evidence" value="ECO:0007669"/>
    <property type="project" value="UniProtKB-EC"/>
</dbReference>
<dbReference type="GO" id="GO:0004650">
    <property type="term" value="F:polygalacturonase activity"/>
    <property type="evidence" value="ECO:0000250"/>
    <property type="project" value="UniProtKB"/>
</dbReference>
<dbReference type="GO" id="GO:0071555">
    <property type="term" value="P:cell wall organization"/>
    <property type="evidence" value="ECO:0007669"/>
    <property type="project" value="UniProtKB-KW"/>
</dbReference>
<dbReference type="GO" id="GO:0045490">
    <property type="term" value="P:pectin catabolic process"/>
    <property type="evidence" value="ECO:0000250"/>
    <property type="project" value="UniProtKB"/>
</dbReference>
<dbReference type="FunFam" id="2.160.20.10:FF:000037">
    <property type="entry name" value="Probable exopolygalacturonase C"/>
    <property type="match status" value="1"/>
</dbReference>
<dbReference type="Gene3D" id="2.160.20.10">
    <property type="entry name" value="Single-stranded right-handed beta-helix, Pectin lyase-like"/>
    <property type="match status" value="1"/>
</dbReference>
<dbReference type="InterPro" id="IPR000743">
    <property type="entry name" value="Glyco_hydro_28"/>
</dbReference>
<dbReference type="InterPro" id="IPR012334">
    <property type="entry name" value="Pectin_lyas_fold"/>
</dbReference>
<dbReference type="InterPro" id="IPR011050">
    <property type="entry name" value="Pectin_lyase_fold/virulence"/>
</dbReference>
<dbReference type="PANTHER" id="PTHR31736">
    <property type="match status" value="1"/>
</dbReference>
<dbReference type="PANTHER" id="PTHR31736:SF11">
    <property type="entry name" value="EXOPOLYGALACTURONASE C-RELATED"/>
    <property type="match status" value="1"/>
</dbReference>
<dbReference type="Pfam" id="PF00295">
    <property type="entry name" value="Glyco_hydro_28"/>
    <property type="match status" value="1"/>
</dbReference>
<dbReference type="SUPFAM" id="SSF51126">
    <property type="entry name" value="Pectin lyase-like"/>
    <property type="match status" value="1"/>
</dbReference>
<gene>
    <name type="primary">pgxC</name>
    <name type="ORF">NFIA_068440</name>
</gene>
<sequence>MLITNPALLGILASLAPLALGAPNQSTQARSRKCVIPSSYTSSQGTADDSPAVAGAFAQCAENSVIIFQEGVDYNIFHPIKATNLSNVEIRVLGNLHLPQDITAVQNIVKSGQNTWFTFQGPRVDWTGADDINNGWINSYGQAWWDANPANSSSFPNRPHLMSYKTSQASIKNFRSRKPIAWNVKLHGDDITVTHAIVDAKSTGGFPFNTDGFDVEGTNISITDSVMYNGDDAIAVNTPSHNIVFARNTIGYQSHGMSIGSLGKDPTDFANITNLRFEDVTVIDALYAARFKSWSGGKGLVKNVVWKNIRVFNVTFPIFVTQSYSDQSASRSGTIDPSSSVMMEDFTWSNFSGSINTYHPGDGSCVTNPCWYNAGLPNLKHTEAIVLECNTESSCKNFRTEGIRLYPQSKDSPSVICMKATAELNPKLGFECKNGTFVPQ</sequence>
<proteinExistence type="inferred from homology"/>
<reference key="1">
    <citation type="journal article" date="2008" name="PLoS Genet.">
        <title>Genomic islands in the pathogenic filamentous fungus Aspergillus fumigatus.</title>
        <authorList>
            <person name="Fedorova N.D."/>
            <person name="Khaldi N."/>
            <person name="Joardar V.S."/>
            <person name="Maiti R."/>
            <person name="Amedeo P."/>
            <person name="Anderson M.J."/>
            <person name="Crabtree J."/>
            <person name="Silva J.C."/>
            <person name="Badger J.H."/>
            <person name="Albarraq A."/>
            <person name="Angiuoli S."/>
            <person name="Bussey H."/>
            <person name="Bowyer P."/>
            <person name="Cotty P.J."/>
            <person name="Dyer P.S."/>
            <person name="Egan A."/>
            <person name="Galens K."/>
            <person name="Fraser-Liggett C.M."/>
            <person name="Haas B.J."/>
            <person name="Inman J.M."/>
            <person name="Kent R."/>
            <person name="Lemieux S."/>
            <person name="Malavazi I."/>
            <person name="Orvis J."/>
            <person name="Roemer T."/>
            <person name="Ronning C.M."/>
            <person name="Sundaram J.P."/>
            <person name="Sutton G."/>
            <person name="Turner G."/>
            <person name="Venter J.C."/>
            <person name="White O.R."/>
            <person name="Whitty B.R."/>
            <person name="Youngman P."/>
            <person name="Wolfe K.H."/>
            <person name="Goldman G.H."/>
            <person name="Wortman J.R."/>
            <person name="Jiang B."/>
            <person name="Denning D.W."/>
            <person name="Nierman W.C."/>
        </authorList>
    </citation>
    <scope>NUCLEOTIDE SEQUENCE [LARGE SCALE GENOMIC DNA]</scope>
    <source>
        <strain>ATCC 1020 / DSM 3700 / CBS 544.65 / FGSC A1164 / JCM 1740 / NRRL 181 / WB 181</strain>
    </source>
</reference>
<accession>A1D7I1</accession>
<comment type="function">
    <text evidence="1">Specific in hydrolyzing the terminal glycosidic bond of polygalacturonic acid and oligogalacturonates.</text>
</comment>
<comment type="catalytic activity">
    <reaction>
        <text>[(1-&gt;4)-alpha-D-galacturonosyl](n) + H2O = alpha-D-galacturonate + [(1-&gt;4)-alpha-D-galacturonosyl](n-1)</text>
        <dbReference type="Rhea" id="RHEA:14117"/>
        <dbReference type="Rhea" id="RHEA-COMP:14570"/>
        <dbReference type="Rhea" id="RHEA-COMP:14572"/>
        <dbReference type="ChEBI" id="CHEBI:15377"/>
        <dbReference type="ChEBI" id="CHEBI:58658"/>
        <dbReference type="ChEBI" id="CHEBI:140523"/>
        <dbReference type="EC" id="3.2.1.67"/>
    </reaction>
</comment>
<comment type="subcellular location">
    <subcellularLocation>
        <location evidence="1">Secreted</location>
    </subcellularLocation>
</comment>
<comment type="similarity">
    <text evidence="3">Belongs to the glycosyl hydrolase 28 family.</text>
</comment>
<evidence type="ECO:0000250" key="1"/>
<evidence type="ECO:0000255" key="2"/>
<evidence type="ECO:0000305" key="3"/>